<evidence type="ECO:0000255" key="1">
    <source>
        <dbReference type="HAMAP-Rule" id="MF_00022"/>
    </source>
</evidence>
<evidence type="ECO:0000305" key="2"/>
<organism>
    <name type="scientific">Orientia tsutsugamushi (strain Boryong)</name>
    <name type="common">Rickettsia tsutsugamushi</name>
    <dbReference type="NCBI Taxonomy" id="357244"/>
    <lineage>
        <taxon>Bacteria</taxon>
        <taxon>Pseudomonadati</taxon>
        <taxon>Pseudomonadota</taxon>
        <taxon>Alphaproteobacteria</taxon>
        <taxon>Rickettsiales</taxon>
        <taxon>Rickettsiaceae</taxon>
        <taxon>Rickettsieae</taxon>
        <taxon>Orientia</taxon>
    </lineage>
</organism>
<reference key="1">
    <citation type="journal article" date="2007" name="Proc. Natl. Acad. Sci. U.S.A.">
        <title>The Orientia tsutsugamushi genome reveals massive proliferation of conjugative type IV secretion system and host-cell interaction genes.</title>
        <authorList>
            <person name="Cho N.-H."/>
            <person name="Kim H.-R."/>
            <person name="Lee J.-H."/>
            <person name="Kim S.-Y."/>
            <person name="Kim J."/>
            <person name="Cha S."/>
            <person name="Kim S.-Y."/>
            <person name="Darby A.C."/>
            <person name="Fuxelius H.-H."/>
            <person name="Yin J."/>
            <person name="Kim J.H."/>
            <person name="Kim J."/>
            <person name="Lee S.J."/>
            <person name="Koh Y.-S."/>
            <person name="Jang W.-J."/>
            <person name="Park K.-H."/>
            <person name="Andersson S.G.E."/>
            <person name="Choi M.-S."/>
            <person name="Kim I.-S."/>
        </authorList>
    </citation>
    <scope>NUCLEOTIDE SEQUENCE [LARGE SCALE GENOMIC DNA]</scope>
    <source>
        <strain>Boryong</strain>
    </source>
</reference>
<feature type="chain" id="PRO_0000367725" description="Glutamate--tRNA ligase 1">
    <location>
        <begin position="1"/>
        <end position="478"/>
    </location>
</feature>
<feature type="short sequence motif" description="'HIGH' region" evidence="1">
    <location>
        <begin position="10"/>
        <end position="20"/>
    </location>
</feature>
<feature type="short sequence motif" description="'KMSKS' region" evidence="1">
    <location>
        <begin position="242"/>
        <end position="246"/>
    </location>
</feature>
<feature type="binding site" evidence="1">
    <location>
        <position position="245"/>
    </location>
    <ligand>
        <name>ATP</name>
        <dbReference type="ChEBI" id="CHEBI:30616"/>
    </ligand>
</feature>
<dbReference type="EC" id="6.1.1.17" evidence="1"/>
<dbReference type="EMBL" id="AM494475">
    <property type="protein sequence ID" value="CAM79639.1"/>
    <property type="status" value="ALT_INIT"/>
    <property type="molecule type" value="Genomic_DNA"/>
</dbReference>
<dbReference type="RefSeq" id="WP_041621140.1">
    <property type="nucleotide sequence ID" value="NC_009488.1"/>
</dbReference>
<dbReference type="SMR" id="A5CD02"/>
<dbReference type="KEGG" id="ots:OTBS_0573"/>
<dbReference type="eggNOG" id="COG0008">
    <property type="taxonomic scope" value="Bacteria"/>
</dbReference>
<dbReference type="HOGENOM" id="CLU_015768_6_0_5"/>
<dbReference type="Proteomes" id="UP000001565">
    <property type="component" value="Chromosome"/>
</dbReference>
<dbReference type="GO" id="GO:0005829">
    <property type="term" value="C:cytosol"/>
    <property type="evidence" value="ECO:0007669"/>
    <property type="project" value="TreeGrafter"/>
</dbReference>
<dbReference type="GO" id="GO:0005524">
    <property type="term" value="F:ATP binding"/>
    <property type="evidence" value="ECO:0007669"/>
    <property type="project" value="UniProtKB-UniRule"/>
</dbReference>
<dbReference type="GO" id="GO:0004818">
    <property type="term" value="F:glutamate-tRNA ligase activity"/>
    <property type="evidence" value="ECO:0007669"/>
    <property type="project" value="UniProtKB-UniRule"/>
</dbReference>
<dbReference type="GO" id="GO:0000049">
    <property type="term" value="F:tRNA binding"/>
    <property type="evidence" value="ECO:0007669"/>
    <property type="project" value="InterPro"/>
</dbReference>
<dbReference type="GO" id="GO:0008270">
    <property type="term" value="F:zinc ion binding"/>
    <property type="evidence" value="ECO:0007669"/>
    <property type="project" value="InterPro"/>
</dbReference>
<dbReference type="GO" id="GO:0006424">
    <property type="term" value="P:glutamyl-tRNA aminoacylation"/>
    <property type="evidence" value="ECO:0007669"/>
    <property type="project" value="UniProtKB-UniRule"/>
</dbReference>
<dbReference type="CDD" id="cd00808">
    <property type="entry name" value="GluRS_core"/>
    <property type="match status" value="1"/>
</dbReference>
<dbReference type="FunFam" id="3.40.50.620:FF:000007">
    <property type="entry name" value="Glutamate--tRNA ligase"/>
    <property type="match status" value="1"/>
</dbReference>
<dbReference type="Gene3D" id="1.10.10.350">
    <property type="match status" value="1"/>
</dbReference>
<dbReference type="Gene3D" id="3.40.50.620">
    <property type="entry name" value="HUPs"/>
    <property type="match status" value="1"/>
</dbReference>
<dbReference type="HAMAP" id="MF_00022">
    <property type="entry name" value="Glu_tRNA_synth_type1"/>
    <property type="match status" value="1"/>
</dbReference>
<dbReference type="InterPro" id="IPR045462">
    <property type="entry name" value="aa-tRNA-synth_I_cd-bd"/>
</dbReference>
<dbReference type="InterPro" id="IPR020751">
    <property type="entry name" value="aa-tRNA-synth_I_codon-bd_sub2"/>
</dbReference>
<dbReference type="InterPro" id="IPR001412">
    <property type="entry name" value="aa-tRNA-synth_I_CS"/>
</dbReference>
<dbReference type="InterPro" id="IPR008925">
    <property type="entry name" value="aa_tRNA-synth_I_cd-bd_sf"/>
</dbReference>
<dbReference type="InterPro" id="IPR004527">
    <property type="entry name" value="Glu-tRNA-ligase_bac/mito"/>
</dbReference>
<dbReference type="InterPro" id="IPR000924">
    <property type="entry name" value="Glu/Gln-tRNA-synth"/>
</dbReference>
<dbReference type="InterPro" id="IPR020058">
    <property type="entry name" value="Glu/Gln-tRNA-synth_Ib_cat-dom"/>
</dbReference>
<dbReference type="InterPro" id="IPR049940">
    <property type="entry name" value="GluQ/Sye"/>
</dbReference>
<dbReference type="InterPro" id="IPR033910">
    <property type="entry name" value="GluRS_core"/>
</dbReference>
<dbReference type="InterPro" id="IPR014729">
    <property type="entry name" value="Rossmann-like_a/b/a_fold"/>
</dbReference>
<dbReference type="NCBIfam" id="TIGR00464">
    <property type="entry name" value="gltX_bact"/>
    <property type="match status" value="1"/>
</dbReference>
<dbReference type="PANTHER" id="PTHR43311">
    <property type="entry name" value="GLUTAMATE--TRNA LIGASE"/>
    <property type="match status" value="1"/>
</dbReference>
<dbReference type="PANTHER" id="PTHR43311:SF2">
    <property type="entry name" value="GLUTAMATE--TRNA LIGASE, MITOCHONDRIAL-RELATED"/>
    <property type="match status" value="1"/>
</dbReference>
<dbReference type="Pfam" id="PF19269">
    <property type="entry name" value="Anticodon_2"/>
    <property type="match status" value="1"/>
</dbReference>
<dbReference type="Pfam" id="PF00749">
    <property type="entry name" value="tRNA-synt_1c"/>
    <property type="match status" value="1"/>
</dbReference>
<dbReference type="PRINTS" id="PR00987">
    <property type="entry name" value="TRNASYNTHGLU"/>
</dbReference>
<dbReference type="SUPFAM" id="SSF48163">
    <property type="entry name" value="An anticodon-binding domain of class I aminoacyl-tRNA synthetases"/>
    <property type="match status" value="1"/>
</dbReference>
<dbReference type="SUPFAM" id="SSF52374">
    <property type="entry name" value="Nucleotidylyl transferase"/>
    <property type="match status" value="1"/>
</dbReference>
<dbReference type="PROSITE" id="PS00178">
    <property type="entry name" value="AA_TRNA_LIGASE_I"/>
    <property type="match status" value="1"/>
</dbReference>
<protein>
    <recommendedName>
        <fullName evidence="1">Glutamate--tRNA ligase 1</fullName>
        <ecNumber evidence="1">6.1.1.17</ecNumber>
    </recommendedName>
    <alternativeName>
        <fullName evidence="1">Glutamyl-tRNA synthetase 1</fullName>
        <shortName evidence="1">GluRS 1</shortName>
    </alternativeName>
</protein>
<keyword id="KW-0030">Aminoacyl-tRNA synthetase</keyword>
<keyword id="KW-0067">ATP-binding</keyword>
<keyword id="KW-0963">Cytoplasm</keyword>
<keyword id="KW-0436">Ligase</keyword>
<keyword id="KW-0547">Nucleotide-binding</keyword>
<keyword id="KW-0648">Protein biosynthesis</keyword>
<keyword id="KW-1185">Reference proteome</keyword>
<sequence>MTNIVTRFAPSPTGFLHIGGARTALFNYLFARHHKGKFLLRIEDTDAARSTEEYKISIIDSLKWLKINWDNDIFYQSANLQRHVNIALELVKSGKAYYCFTSPEEIDLQRQLAITQKQSFIFRSPWRNNIPSSLSLKNNNKAYVIRFKAPDYGTTIINDHVQGEVVFQNQQIDDMILVRSDGTPTYMLAVVVDDHDMGITHIIRGDDHLTNAAKQIALYDALGWAAPAMVHIPLIYGPDGTKLSKRHGAIGVDAYQKMGYLPEALCNYLLRLGWSYQDEEIISHERAIKLFDIDGLGGKSAARLDFDKMLYLNGYYIRSTDNSILAKLVIEILSKQYILSNESCNLIQKGMSGLKSRANLLTDLAENAKIYVLESQLTFINEALNIIQKTPSMLITEVIDIINNLQELNCESVKQALTEFAKTKKMKLGQLMDPIRALLTGNTKSPSIFEVIPILGKIHTIKRLAGIKAIKSNNQTLV</sequence>
<gene>
    <name evidence="1" type="primary">gltX1</name>
    <name type="ordered locus">OTBS_0573</name>
</gene>
<accession>A5CD02</accession>
<comment type="function">
    <text evidence="1">Catalyzes the attachment of glutamate to tRNA(Glu) in a two-step reaction: glutamate is first activated by ATP to form Glu-AMP and then transferred to the acceptor end of tRNA(Glu).</text>
</comment>
<comment type="catalytic activity">
    <reaction evidence="1">
        <text>tRNA(Glu) + L-glutamate + ATP = L-glutamyl-tRNA(Glu) + AMP + diphosphate</text>
        <dbReference type="Rhea" id="RHEA:23540"/>
        <dbReference type="Rhea" id="RHEA-COMP:9663"/>
        <dbReference type="Rhea" id="RHEA-COMP:9680"/>
        <dbReference type="ChEBI" id="CHEBI:29985"/>
        <dbReference type="ChEBI" id="CHEBI:30616"/>
        <dbReference type="ChEBI" id="CHEBI:33019"/>
        <dbReference type="ChEBI" id="CHEBI:78442"/>
        <dbReference type="ChEBI" id="CHEBI:78520"/>
        <dbReference type="ChEBI" id="CHEBI:456215"/>
        <dbReference type="EC" id="6.1.1.17"/>
    </reaction>
</comment>
<comment type="subunit">
    <text evidence="1">Monomer.</text>
</comment>
<comment type="subcellular location">
    <subcellularLocation>
        <location evidence="1">Cytoplasm</location>
    </subcellularLocation>
</comment>
<comment type="similarity">
    <text evidence="1">Belongs to the class-I aminoacyl-tRNA synthetase family. Glutamate--tRNA ligase type 1 subfamily.</text>
</comment>
<comment type="sequence caution" evidence="2">
    <conflict type="erroneous initiation">
        <sequence resource="EMBL-CDS" id="CAM79639"/>
    </conflict>
</comment>
<proteinExistence type="inferred from homology"/>
<name>SYE1_ORITB</name>